<proteinExistence type="inferred from homology"/>
<evidence type="ECO:0000255" key="1">
    <source>
        <dbReference type="HAMAP-Rule" id="MF_00222"/>
    </source>
</evidence>
<keyword id="KW-0028">Amino-acid biosynthesis</keyword>
<keyword id="KW-0057">Aromatic amino acid biosynthesis</keyword>
<keyword id="KW-0521">NADP</keyword>
<keyword id="KW-0560">Oxidoreductase</keyword>
<name>AROE_HELAH</name>
<organism>
    <name type="scientific">Helicobacter acinonychis (strain Sheeba)</name>
    <dbReference type="NCBI Taxonomy" id="382638"/>
    <lineage>
        <taxon>Bacteria</taxon>
        <taxon>Pseudomonadati</taxon>
        <taxon>Campylobacterota</taxon>
        <taxon>Epsilonproteobacteria</taxon>
        <taxon>Campylobacterales</taxon>
        <taxon>Helicobacteraceae</taxon>
        <taxon>Helicobacter</taxon>
    </lineage>
</organism>
<protein>
    <recommendedName>
        <fullName evidence="1">Shikimate dehydrogenase (NADP(+))</fullName>
        <shortName evidence="1">SDH</shortName>
        <ecNumber evidence="1">1.1.1.25</ecNumber>
    </recommendedName>
</protein>
<gene>
    <name evidence="1" type="primary">aroE</name>
    <name type="ordered locus">Hac_0244</name>
</gene>
<comment type="function">
    <text evidence="1">Involved in the biosynthesis of the chorismate, which leads to the biosynthesis of aromatic amino acids. Catalyzes the reversible NADPH linked reduction of 3-dehydroshikimate (DHSA) to yield shikimate (SA).</text>
</comment>
<comment type="catalytic activity">
    <reaction evidence="1">
        <text>shikimate + NADP(+) = 3-dehydroshikimate + NADPH + H(+)</text>
        <dbReference type="Rhea" id="RHEA:17737"/>
        <dbReference type="ChEBI" id="CHEBI:15378"/>
        <dbReference type="ChEBI" id="CHEBI:16630"/>
        <dbReference type="ChEBI" id="CHEBI:36208"/>
        <dbReference type="ChEBI" id="CHEBI:57783"/>
        <dbReference type="ChEBI" id="CHEBI:58349"/>
        <dbReference type="EC" id="1.1.1.25"/>
    </reaction>
</comment>
<comment type="pathway">
    <text evidence="1">Metabolic intermediate biosynthesis; chorismate biosynthesis; chorismate from D-erythrose 4-phosphate and phosphoenolpyruvate: step 4/7.</text>
</comment>
<comment type="subunit">
    <text evidence="1">Homodimer.</text>
</comment>
<comment type="similarity">
    <text evidence="1">Belongs to the shikimate dehydrogenase family.</text>
</comment>
<accession>Q17Z34</accession>
<feature type="chain" id="PRO_1000021290" description="Shikimate dehydrogenase (NADP(+))">
    <location>
        <begin position="1"/>
        <end position="263"/>
    </location>
</feature>
<feature type="active site" description="Proton acceptor" evidence="1">
    <location>
        <position position="69"/>
    </location>
</feature>
<feature type="binding site" evidence="1">
    <location>
        <begin position="16"/>
        <end position="18"/>
    </location>
    <ligand>
        <name>shikimate</name>
        <dbReference type="ChEBI" id="CHEBI:36208"/>
    </ligand>
</feature>
<feature type="binding site" evidence="1">
    <location>
        <position position="65"/>
    </location>
    <ligand>
        <name>shikimate</name>
        <dbReference type="ChEBI" id="CHEBI:36208"/>
    </ligand>
</feature>
<feature type="binding site" evidence="1">
    <location>
        <position position="90"/>
    </location>
    <ligand>
        <name>shikimate</name>
        <dbReference type="ChEBI" id="CHEBI:36208"/>
    </ligand>
</feature>
<feature type="binding site" evidence="1">
    <location>
        <position position="105"/>
    </location>
    <ligand>
        <name>shikimate</name>
        <dbReference type="ChEBI" id="CHEBI:36208"/>
    </ligand>
</feature>
<feature type="binding site" evidence="1">
    <location>
        <begin position="125"/>
        <end position="129"/>
    </location>
    <ligand>
        <name>NADP(+)</name>
        <dbReference type="ChEBI" id="CHEBI:58349"/>
    </ligand>
</feature>
<feature type="binding site" evidence="1">
    <location>
        <position position="208"/>
    </location>
    <ligand>
        <name>NADP(+)</name>
        <dbReference type="ChEBI" id="CHEBI:58349"/>
    </ligand>
</feature>
<feature type="binding site" evidence="1">
    <location>
        <position position="210"/>
    </location>
    <ligand>
        <name>shikimate</name>
        <dbReference type="ChEBI" id="CHEBI:36208"/>
    </ligand>
</feature>
<feature type="binding site" evidence="1">
    <location>
        <position position="230"/>
    </location>
    <ligand>
        <name>NADP(+)</name>
        <dbReference type="ChEBI" id="CHEBI:58349"/>
    </ligand>
</feature>
<dbReference type="EC" id="1.1.1.25" evidence="1"/>
<dbReference type="EMBL" id="AM260522">
    <property type="protein sequence ID" value="CAJ99092.1"/>
    <property type="molecule type" value="Genomic_DNA"/>
</dbReference>
<dbReference type="RefSeq" id="WP_011577207.1">
    <property type="nucleotide sequence ID" value="NC_008229.1"/>
</dbReference>
<dbReference type="SMR" id="Q17Z34"/>
<dbReference type="STRING" id="382638.Hac_0244"/>
<dbReference type="GeneID" id="31757759"/>
<dbReference type="KEGG" id="hac:Hac_0244"/>
<dbReference type="eggNOG" id="COG0169">
    <property type="taxonomic scope" value="Bacteria"/>
</dbReference>
<dbReference type="HOGENOM" id="CLU_044063_2_0_7"/>
<dbReference type="OrthoDB" id="9792692at2"/>
<dbReference type="BioCyc" id="HACI382638:HAC_RS01065-MONOMER"/>
<dbReference type="UniPathway" id="UPA00053">
    <property type="reaction ID" value="UER00087"/>
</dbReference>
<dbReference type="Proteomes" id="UP000000775">
    <property type="component" value="Chromosome"/>
</dbReference>
<dbReference type="GO" id="GO:0005829">
    <property type="term" value="C:cytosol"/>
    <property type="evidence" value="ECO:0007669"/>
    <property type="project" value="TreeGrafter"/>
</dbReference>
<dbReference type="GO" id="GO:0050661">
    <property type="term" value="F:NADP binding"/>
    <property type="evidence" value="ECO:0007669"/>
    <property type="project" value="InterPro"/>
</dbReference>
<dbReference type="GO" id="GO:0004764">
    <property type="term" value="F:shikimate 3-dehydrogenase (NADP+) activity"/>
    <property type="evidence" value="ECO:0007669"/>
    <property type="project" value="UniProtKB-UniRule"/>
</dbReference>
<dbReference type="GO" id="GO:0008652">
    <property type="term" value="P:amino acid biosynthetic process"/>
    <property type="evidence" value="ECO:0007669"/>
    <property type="project" value="UniProtKB-KW"/>
</dbReference>
<dbReference type="GO" id="GO:0009073">
    <property type="term" value="P:aromatic amino acid family biosynthetic process"/>
    <property type="evidence" value="ECO:0007669"/>
    <property type="project" value="UniProtKB-KW"/>
</dbReference>
<dbReference type="GO" id="GO:0009423">
    <property type="term" value="P:chorismate biosynthetic process"/>
    <property type="evidence" value="ECO:0007669"/>
    <property type="project" value="UniProtKB-UniRule"/>
</dbReference>
<dbReference type="GO" id="GO:0019632">
    <property type="term" value="P:shikimate metabolic process"/>
    <property type="evidence" value="ECO:0007669"/>
    <property type="project" value="InterPro"/>
</dbReference>
<dbReference type="CDD" id="cd01065">
    <property type="entry name" value="NAD_bind_Shikimate_DH"/>
    <property type="match status" value="1"/>
</dbReference>
<dbReference type="FunFam" id="3.40.50.10860:FF:000025">
    <property type="entry name" value="Shikimate dehydrogenase (NADP(+))"/>
    <property type="match status" value="1"/>
</dbReference>
<dbReference type="Gene3D" id="3.40.50.10860">
    <property type="entry name" value="Leucine Dehydrogenase, chain A, domain 1"/>
    <property type="match status" value="1"/>
</dbReference>
<dbReference type="Gene3D" id="3.40.50.720">
    <property type="entry name" value="NAD(P)-binding Rossmann-like Domain"/>
    <property type="match status" value="1"/>
</dbReference>
<dbReference type="HAMAP" id="MF_00222">
    <property type="entry name" value="Shikimate_DH_AroE"/>
    <property type="match status" value="1"/>
</dbReference>
<dbReference type="InterPro" id="IPR046346">
    <property type="entry name" value="Aminoacid_DH-like_N_sf"/>
</dbReference>
<dbReference type="InterPro" id="IPR036291">
    <property type="entry name" value="NAD(P)-bd_dom_sf"/>
</dbReference>
<dbReference type="InterPro" id="IPR011342">
    <property type="entry name" value="Shikimate_DH"/>
</dbReference>
<dbReference type="InterPro" id="IPR013708">
    <property type="entry name" value="Shikimate_DH-bd_N"/>
</dbReference>
<dbReference type="InterPro" id="IPR022893">
    <property type="entry name" value="Shikimate_DH_fam"/>
</dbReference>
<dbReference type="NCBIfam" id="TIGR00507">
    <property type="entry name" value="aroE"/>
    <property type="match status" value="1"/>
</dbReference>
<dbReference type="NCBIfam" id="NF001316">
    <property type="entry name" value="PRK00258.2-5"/>
    <property type="match status" value="1"/>
</dbReference>
<dbReference type="PANTHER" id="PTHR21089:SF1">
    <property type="entry name" value="BIFUNCTIONAL 3-DEHYDROQUINATE DEHYDRATASE_SHIKIMATE DEHYDROGENASE, CHLOROPLASTIC"/>
    <property type="match status" value="1"/>
</dbReference>
<dbReference type="PANTHER" id="PTHR21089">
    <property type="entry name" value="SHIKIMATE DEHYDROGENASE"/>
    <property type="match status" value="1"/>
</dbReference>
<dbReference type="Pfam" id="PF08501">
    <property type="entry name" value="Shikimate_dh_N"/>
    <property type="match status" value="1"/>
</dbReference>
<dbReference type="SUPFAM" id="SSF53223">
    <property type="entry name" value="Aminoacid dehydrogenase-like, N-terminal domain"/>
    <property type="match status" value="1"/>
</dbReference>
<dbReference type="SUPFAM" id="SSF51735">
    <property type="entry name" value="NAD(P)-binding Rossmann-fold domains"/>
    <property type="match status" value="1"/>
</dbReference>
<reference key="1">
    <citation type="journal article" date="2006" name="PLoS Genet.">
        <title>Who ate whom? Adaptive Helicobacter genomic changes that accompanied a host jump from early humans to large felines.</title>
        <authorList>
            <person name="Eppinger M."/>
            <person name="Baar C."/>
            <person name="Linz B."/>
            <person name="Raddatz G."/>
            <person name="Lanz C."/>
            <person name="Keller H."/>
            <person name="Morelli G."/>
            <person name="Gressmann H."/>
            <person name="Achtman M."/>
            <person name="Schuster S.C."/>
        </authorList>
    </citation>
    <scope>NUCLEOTIDE SEQUENCE [LARGE SCALE GENOMIC DNA]</scope>
    <source>
        <strain>Sheeba</strain>
    </source>
</reference>
<sequence>MGLKSFGVLGNPIKHSKSPLIHNACFLTFQKELGFLGHYHPILLPLESHIKNEFLNLGLSGANVTLPFKERAFQVCDKIKGIALECGAVNTLVLENDELVGYNTDALGFYLSLKQKNYQSALILGSGGSAKALACELKKRGLKVSVLNRSTKGLDFFQNLGCACFTTTPKGAFDLIINATSASLNNELPLDKEVLKGYFKESRLAYDLAYGFLTPFLSLAKELKLPFQDGKGMLIYQASLSFEKFSSSQISYSKAFEIMRSVF</sequence>